<gene>
    <name evidence="1" type="primary">murI</name>
    <name type="ordered locus">YE0140</name>
</gene>
<organism>
    <name type="scientific">Yersinia enterocolitica serotype O:8 / biotype 1B (strain NCTC 13174 / 8081)</name>
    <dbReference type="NCBI Taxonomy" id="393305"/>
    <lineage>
        <taxon>Bacteria</taxon>
        <taxon>Pseudomonadati</taxon>
        <taxon>Pseudomonadota</taxon>
        <taxon>Gammaproteobacteria</taxon>
        <taxon>Enterobacterales</taxon>
        <taxon>Yersiniaceae</taxon>
        <taxon>Yersinia</taxon>
    </lineage>
</organism>
<proteinExistence type="inferred from homology"/>
<reference key="1">
    <citation type="journal article" date="2006" name="PLoS Genet.">
        <title>The complete genome sequence and comparative genome analysis of the high pathogenicity Yersinia enterocolitica strain 8081.</title>
        <authorList>
            <person name="Thomson N.R."/>
            <person name="Howard S."/>
            <person name="Wren B.W."/>
            <person name="Holden M.T.G."/>
            <person name="Crossman L."/>
            <person name="Challis G.L."/>
            <person name="Churcher C."/>
            <person name="Mungall K."/>
            <person name="Brooks K."/>
            <person name="Chillingworth T."/>
            <person name="Feltwell T."/>
            <person name="Abdellah Z."/>
            <person name="Hauser H."/>
            <person name="Jagels K."/>
            <person name="Maddison M."/>
            <person name="Moule S."/>
            <person name="Sanders M."/>
            <person name="Whitehead S."/>
            <person name="Quail M.A."/>
            <person name="Dougan G."/>
            <person name="Parkhill J."/>
            <person name="Prentice M.B."/>
        </authorList>
    </citation>
    <scope>NUCLEOTIDE SEQUENCE [LARGE SCALE GENOMIC DNA]</scope>
    <source>
        <strain>NCTC 13174 / 8081</strain>
    </source>
</reference>
<evidence type="ECO:0000255" key="1">
    <source>
        <dbReference type="HAMAP-Rule" id="MF_00258"/>
    </source>
</evidence>
<comment type="function">
    <text evidence="1">Provides the (R)-glutamate required for cell wall biosynthesis.</text>
</comment>
<comment type="catalytic activity">
    <reaction evidence="1">
        <text>L-glutamate = D-glutamate</text>
        <dbReference type="Rhea" id="RHEA:12813"/>
        <dbReference type="ChEBI" id="CHEBI:29985"/>
        <dbReference type="ChEBI" id="CHEBI:29986"/>
        <dbReference type="EC" id="5.1.1.3"/>
    </reaction>
</comment>
<comment type="pathway">
    <text evidence="1">Cell wall biogenesis; peptidoglycan biosynthesis.</text>
</comment>
<comment type="similarity">
    <text evidence="1">Belongs to the aspartate/glutamate racemases family.</text>
</comment>
<keyword id="KW-0133">Cell shape</keyword>
<keyword id="KW-0961">Cell wall biogenesis/degradation</keyword>
<keyword id="KW-0413">Isomerase</keyword>
<keyword id="KW-0573">Peptidoglycan synthesis</keyword>
<sequence length="287" mass="31240">MAIKPLDESITSREAITSKADTAPRPTALIFDSGVGGLSVYQEIRQLLPDLHYIYAFDNVAFPYGEKSGEFIVERVLEIVTAVQQRHPLAIVVIACNTASTVSLPALRERFTFPVVGVVPAIKPAVRLTRNGVVGLLATRGTVHASYTQDLIERFATDCKIELLGSSELVELAETKLHGGVVPKEALKKILHPWLAMREPPDTIVLGCTHFPLLTEELAQVLPEGTRMVDSGAAIARRTAWLISSQENVISSDEENIAYCMALNADTDALLPVLQGYGFPSLEKLPI</sequence>
<protein>
    <recommendedName>
        <fullName evidence="1">Glutamate racemase</fullName>
        <ecNumber evidence="1">5.1.1.3</ecNumber>
    </recommendedName>
</protein>
<dbReference type="EC" id="5.1.1.3" evidence="1"/>
<dbReference type="EMBL" id="AM286415">
    <property type="protein sequence ID" value="CAL10280.1"/>
    <property type="molecule type" value="Genomic_DNA"/>
</dbReference>
<dbReference type="RefSeq" id="WP_005176045.1">
    <property type="nucleotide sequence ID" value="NC_008800.1"/>
</dbReference>
<dbReference type="RefSeq" id="YP_001004532.1">
    <property type="nucleotide sequence ID" value="NC_008800.1"/>
</dbReference>
<dbReference type="SMR" id="A1JI42"/>
<dbReference type="KEGG" id="yen:YE0140"/>
<dbReference type="PATRIC" id="fig|393305.7.peg.230"/>
<dbReference type="eggNOG" id="COG0796">
    <property type="taxonomic scope" value="Bacteria"/>
</dbReference>
<dbReference type="HOGENOM" id="CLU_052344_2_0_6"/>
<dbReference type="OrthoDB" id="9801055at2"/>
<dbReference type="UniPathway" id="UPA00219"/>
<dbReference type="Proteomes" id="UP000000642">
    <property type="component" value="Chromosome"/>
</dbReference>
<dbReference type="GO" id="GO:0008881">
    <property type="term" value="F:glutamate racemase activity"/>
    <property type="evidence" value="ECO:0007669"/>
    <property type="project" value="UniProtKB-UniRule"/>
</dbReference>
<dbReference type="GO" id="GO:0071555">
    <property type="term" value="P:cell wall organization"/>
    <property type="evidence" value="ECO:0007669"/>
    <property type="project" value="UniProtKB-KW"/>
</dbReference>
<dbReference type="GO" id="GO:0009252">
    <property type="term" value="P:peptidoglycan biosynthetic process"/>
    <property type="evidence" value="ECO:0007669"/>
    <property type="project" value="UniProtKB-UniRule"/>
</dbReference>
<dbReference type="GO" id="GO:0008360">
    <property type="term" value="P:regulation of cell shape"/>
    <property type="evidence" value="ECO:0007669"/>
    <property type="project" value="UniProtKB-KW"/>
</dbReference>
<dbReference type="FunFam" id="3.40.50.1860:FF:000002">
    <property type="entry name" value="Glutamate racemase"/>
    <property type="match status" value="1"/>
</dbReference>
<dbReference type="Gene3D" id="3.40.50.1860">
    <property type="match status" value="2"/>
</dbReference>
<dbReference type="HAMAP" id="MF_00258">
    <property type="entry name" value="Glu_racemase"/>
    <property type="match status" value="1"/>
</dbReference>
<dbReference type="InterPro" id="IPR015942">
    <property type="entry name" value="Asp/Glu/hydantoin_racemase"/>
</dbReference>
<dbReference type="InterPro" id="IPR001920">
    <property type="entry name" value="Asp/Glu_race"/>
</dbReference>
<dbReference type="InterPro" id="IPR018187">
    <property type="entry name" value="Asp/Glu_racemase_AS_1"/>
</dbReference>
<dbReference type="InterPro" id="IPR033134">
    <property type="entry name" value="Asp/Glu_racemase_AS_2"/>
</dbReference>
<dbReference type="InterPro" id="IPR004391">
    <property type="entry name" value="Glu_race"/>
</dbReference>
<dbReference type="NCBIfam" id="TIGR00067">
    <property type="entry name" value="glut_race"/>
    <property type="match status" value="1"/>
</dbReference>
<dbReference type="NCBIfam" id="NF002034">
    <property type="entry name" value="PRK00865.1-1"/>
    <property type="match status" value="1"/>
</dbReference>
<dbReference type="PANTHER" id="PTHR21198">
    <property type="entry name" value="GLUTAMATE RACEMASE"/>
    <property type="match status" value="1"/>
</dbReference>
<dbReference type="PANTHER" id="PTHR21198:SF2">
    <property type="entry name" value="GLUTAMATE RACEMASE"/>
    <property type="match status" value="1"/>
</dbReference>
<dbReference type="Pfam" id="PF01177">
    <property type="entry name" value="Asp_Glu_race"/>
    <property type="match status" value="1"/>
</dbReference>
<dbReference type="SUPFAM" id="SSF53681">
    <property type="entry name" value="Aspartate/glutamate racemase"/>
    <property type="match status" value="2"/>
</dbReference>
<dbReference type="PROSITE" id="PS00923">
    <property type="entry name" value="ASP_GLU_RACEMASE_1"/>
    <property type="match status" value="1"/>
</dbReference>
<dbReference type="PROSITE" id="PS00924">
    <property type="entry name" value="ASP_GLU_RACEMASE_2"/>
    <property type="match status" value="1"/>
</dbReference>
<feature type="chain" id="PRO_1000047639" description="Glutamate racemase">
    <location>
        <begin position="1"/>
        <end position="287"/>
    </location>
</feature>
<feature type="active site" description="Proton donor/acceptor" evidence="1">
    <location>
        <position position="96"/>
    </location>
</feature>
<feature type="active site" description="Proton donor/acceptor" evidence="1">
    <location>
        <position position="208"/>
    </location>
</feature>
<feature type="binding site" evidence="1">
    <location>
        <begin position="32"/>
        <end position="33"/>
    </location>
    <ligand>
        <name>substrate</name>
    </ligand>
</feature>
<feature type="binding site" evidence="1">
    <location>
        <begin position="64"/>
        <end position="65"/>
    </location>
    <ligand>
        <name>substrate</name>
    </ligand>
</feature>
<feature type="binding site" evidence="1">
    <location>
        <begin position="97"/>
        <end position="98"/>
    </location>
    <ligand>
        <name>substrate</name>
    </ligand>
</feature>
<feature type="binding site" evidence="1">
    <location>
        <begin position="209"/>
        <end position="210"/>
    </location>
    <ligand>
        <name>substrate</name>
    </ligand>
</feature>
<accession>A1JI42</accession>
<name>MURI_YERE8</name>